<evidence type="ECO:0000250" key="1"/>
<evidence type="ECO:0000250" key="2">
    <source>
        <dbReference type="UniProtKB" id="P13530"/>
    </source>
</evidence>
<evidence type="ECO:0000305" key="3"/>
<proteinExistence type="inferred from homology"/>
<accession>Q5N4S9</accession>
<feature type="initiator methionine" description="Removed" evidence="1">
    <location>
        <position position="1"/>
    </location>
</feature>
<feature type="chain" id="PRO_0000199131" description="C-phycocyanin-2 alpha subunit">
    <location>
        <begin position="2"/>
        <end position="163"/>
    </location>
</feature>
<feature type="binding site" description="covalent" evidence="2">
    <location>
        <position position="85"/>
    </location>
    <ligand>
        <name>(2R,3E)-phycocyanobilin</name>
        <dbReference type="ChEBI" id="CHEBI:85275"/>
    </ligand>
</feature>
<organism>
    <name type="scientific">Synechococcus sp. (strain ATCC 27144 / PCC 6301 / SAUG 1402/1)</name>
    <name type="common">Anacystis nidulans</name>
    <dbReference type="NCBI Taxonomy" id="269084"/>
    <lineage>
        <taxon>Bacteria</taxon>
        <taxon>Bacillati</taxon>
        <taxon>Cyanobacteriota</taxon>
        <taxon>Cyanophyceae</taxon>
        <taxon>Synechococcales</taxon>
        <taxon>Synechococcaceae</taxon>
        <taxon>Synechococcus</taxon>
    </lineage>
</organism>
<protein>
    <recommendedName>
        <fullName>C-phycocyanin-2 alpha subunit</fullName>
    </recommendedName>
</protein>
<reference key="1">
    <citation type="journal article" date="2007" name="Photosyn. Res.">
        <title>Complete nucleotide sequence of the freshwater unicellular cyanobacterium Synechococcus elongatus PCC 6301 chromosome: gene content and organization.</title>
        <authorList>
            <person name="Sugita C."/>
            <person name="Ogata K."/>
            <person name="Shikata M."/>
            <person name="Jikuya H."/>
            <person name="Takano J."/>
            <person name="Furumichi M."/>
            <person name="Kanehisa M."/>
            <person name="Omata T."/>
            <person name="Sugiura M."/>
            <person name="Sugita M."/>
        </authorList>
    </citation>
    <scope>NUCLEOTIDE SEQUENCE [LARGE SCALE GENOMIC DNA]</scope>
    <source>
        <strain>ATCC 27144 / PCC 6301 / SAUG 1402/1</strain>
    </source>
</reference>
<comment type="function">
    <text>Light-harvesting photosynthetic bile pigment-protein from the phycobiliprotein complex (phycobilisome, PBS). Phycocyanin is the major phycobiliprotein in the PBS rod.</text>
</comment>
<comment type="subunit">
    <text evidence="2">Heterodimer of an alpha and a beta subunit, which further assembles into trimers and the trimers into hexamers.</text>
</comment>
<comment type="subcellular location">
    <subcellularLocation>
        <location evidence="1">Cellular thylakoid membrane</location>
        <topology evidence="1">Peripheral membrane protein</topology>
        <orientation evidence="1">Cytoplasmic side</orientation>
    </subcellularLocation>
    <text evidence="1">Part of the phycobilisome rod.</text>
</comment>
<comment type="PTM">
    <text evidence="1 2">Contains one covalently linked bilin chromophore.</text>
</comment>
<comment type="similarity">
    <text evidence="3">Belongs to the phycobiliprotein family.</text>
</comment>
<name>PHCA2_SYNP6</name>
<keyword id="KW-0042">Antenna complex</keyword>
<keyword id="KW-0089">Bile pigment</keyword>
<keyword id="KW-0157">Chromophore</keyword>
<keyword id="KW-0249">Electron transport</keyword>
<keyword id="KW-0472">Membrane</keyword>
<keyword id="KW-0602">Photosynthesis</keyword>
<keyword id="KW-0605">Phycobilisome</keyword>
<keyword id="KW-0793">Thylakoid</keyword>
<keyword id="KW-0813">Transport</keyword>
<gene>
    <name type="primary">cpcA2</name>
    <name type="ordered locus">syc0500_c</name>
</gene>
<dbReference type="EMBL" id="AP008231">
    <property type="protein sequence ID" value="BAD78690.1"/>
    <property type="molecule type" value="Genomic_DNA"/>
</dbReference>
<dbReference type="RefSeq" id="WP_011242812.1">
    <property type="nucleotide sequence ID" value="NC_006576.1"/>
</dbReference>
<dbReference type="SMR" id="Q5N4S9"/>
<dbReference type="KEGG" id="syc:syc0500_c"/>
<dbReference type="eggNOG" id="ENOG502Z85C">
    <property type="taxonomic scope" value="Bacteria"/>
</dbReference>
<dbReference type="Proteomes" id="UP000001175">
    <property type="component" value="Chromosome"/>
</dbReference>
<dbReference type="GO" id="GO:0030089">
    <property type="term" value="C:phycobilisome"/>
    <property type="evidence" value="ECO:0007669"/>
    <property type="project" value="UniProtKB-KW"/>
</dbReference>
<dbReference type="GO" id="GO:0031676">
    <property type="term" value="C:plasma membrane-derived thylakoid membrane"/>
    <property type="evidence" value="ECO:0007669"/>
    <property type="project" value="UniProtKB-SubCell"/>
</dbReference>
<dbReference type="GO" id="GO:0015979">
    <property type="term" value="P:photosynthesis"/>
    <property type="evidence" value="ECO:0007669"/>
    <property type="project" value="UniProtKB-KW"/>
</dbReference>
<dbReference type="Gene3D" id="1.10.490.20">
    <property type="entry name" value="Phycocyanins"/>
    <property type="match status" value="1"/>
</dbReference>
<dbReference type="InterPro" id="IPR009050">
    <property type="entry name" value="Globin-like_sf"/>
</dbReference>
<dbReference type="InterPro" id="IPR012128">
    <property type="entry name" value="Phycobilisome_asu/bsu"/>
</dbReference>
<dbReference type="InterPro" id="IPR038719">
    <property type="entry name" value="Phycobilisome_asu/bsu_sf"/>
</dbReference>
<dbReference type="InterPro" id="IPR006246">
    <property type="entry name" value="Phycocyanin_a"/>
</dbReference>
<dbReference type="NCBIfam" id="TIGR01338">
    <property type="entry name" value="phycocy_alpha"/>
    <property type="match status" value="1"/>
</dbReference>
<dbReference type="PANTHER" id="PTHR34011:SF4">
    <property type="entry name" value="C-PHYCOCYANIN ALPHA SUBUNIT"/>
    <property type="match status" value="1"/>
</dbReference>
<dbReference type="PANTHER" id="PTHR34011">
    <property type="entry name" value="PHYCOBILISOME 32.1 KDA LINKER POLYPEPTIDE, PHYCOCYANIN-ASSOCIATED, ROD 2-RELATED"/>
    <property type="match status" value="1"/>
</dbReference>
<dbReference type="Pfam" id="PF00502">
    <property type="entry name" value="Phycobilisome"/>
    <property type="match status" value="1"/>
</dbReference>
<dbReference type="PIRSF" id="PIRSF000081">
    <property type="entry name" value="Phycocyanin"/>
    <property type="match status" value="1"/>
</dbReference>
<dbReference type="SUPFAM" id="SSF46458">
    <property type="entry name" value="Globin-like"/>
    <property type="match status" value="1"/>
</dbReference>
<sequence>MSKTPLTEAVAAADSQGRFLSSAELQVAFGRFRQAASGLAAAKALANNADSLVNGAANAVYSKFPYTTSTPGNNFASTPEGKAKCARDIGYYLRIVTYALVAGGTGPIDEYLLAGLDEINKTFDLAPSWYVEALKYIKANHGLSGDSRDEANSYIDYLINALS</sequence>